<organism evidence="8">
    <name type="scientific">Arabidopsis thaliana</name>
    <name type="common">Mouse-ear cress</name>
    <dbReference type="NCBI Taxonomy" id="3702"/>
    <lineage>
        <taxon>Eukaryota</taxon>
        <taxon>Viridiplantae</taxon>
        <taxon>Streptophyta</taxon>
        <taxon>Embryophyta</taxon>
        <taxon>Tracheophyta</taxon>
        <taxon>Spermatophyta</taxon>
        <taxon>Magnoliopsida</taxon>
        <taxon>eudicotyledons</taxon>
        <taxon>Gunneridae</taxon>
        <taxon>Pentapetalae</taxon>
        <taxon>rosids</taxon>
        <taxon>malvids</taxon>
        <taxon>Brassicales</taxon>
        <taxon>Brassicaceae</taxon>
        <taxon>Camelineae</taxon>
        <taxon>Arabidopsis</taxon>
    </lineage>
</organism>
<reference key="1">
    <citation type="journal article" date="1999" name="Nature">
        <title>Sequence and analysis of chromosome 2 of the plant Arabidopsis thaliana.</title>
        <authorList>
            <person name="Lin X."/>
            <person name="Kaul S."/>
            <person name="Rounsley S.D."/>
            <person name="Shea T.P."/>
            <person name="Benito M.-I."/>
            <person name="Town C.D."/>
            <person name="Fujii C.Y."/>
            <person name="Mason T.M."/>
            <person name="Bowman C.L."/>
            <person name="Barnstead M.E."/>
            <person name="Feldblyum T.V."/>
            <person name="Buell C.R."/>
            <person name="Ketchum K.A."/>
            <person name="Lee J.J."/>
            <person name="Ronning C.M."/>
            <person name="Koo H.L."/>
            <person name="Moffat K.S."/>
            <person name="Cronin L.A."/>
            <person name="Shen M."/>
            <person name="Pai G."/>
            <person name="Van Aken S."/>
            <person name="Umayam L."/>
            <person name="Tallon L.J."/>
            <person name="Gill J.E."/>
            <person name="Adams M.D."/>
            <person name="Carrera A.J."/>
            <person name="Creasy T.H."/>
            <person name="Goodman H.M."/>
            <person name="Somerville C.R."/>
            <person name="Copenhaver G.P."/>
            <person name="Preuss D."/>
            <person name="Nierman W.C."/>
            <person name="White O."/>
            <person name="Eisen J.A."/>
            <person name="Salzberg S.L."/>
            <person name="Fraser C.M."/>
            <person name="Venter J.C."/>
        </authorList>
    </citation>
    <scope>NUCLEOTIDE SEQUENCE [LARGE SCALE GENOMIC DNA]</scope>
    <source>
        <strain evidence="8">cv. Columbia</strain>
    </source>
</reference>
<reference key="2">
    <citation type="journal article" date="2017" name="Plant J.">
        <title>Araport11: a complete reannotation of the Arabidopsis thaliana reference genome.</title>
        <authorList>
            <person name="Cheng C.Y."/>
            <person name="Krishnakumar V."/>
            <person name="Chan A.P."/>
            <person name="Thibaud-Nissen F."/>
            <person name="Schobel S."/>
            <person name="Town C.D."/>
        </authorList>
    </citation>
    <scope>GENOME REANNOTATION</scope>
    <source>
        <strain evidence="8">cv. Columbia</strain>
    </source>
</reference>
<reference key="3">
    <citation type="journal article" date="2003" name="Science">
        <title>Empirical analysis of transcriptional activity in the Arabidopsis genome.</title>
        <authorList>
            <person name="Yamada K."/>
            <person name="Lim J."/>
            <person name="Dale J.M."/>
            <person name="Chen H."/>
            <person name="Shinn P."/>
            <person name="Palm C.J."/>
            <person name="Southwick A.M."/>
            <person name="Wu H.C."/>
            <person name="Kim C.J."/>
            <person name="Nguyen M."/>
            <person name="Pham P.K."/>
            <person name="Cheuk R.F."/>
            <person name="Karlin-Newmann G."/>
            <person name="Liu S.X."/>
            <person name="Lam B."/>
            <person name="Sakano H."/>
            <person name="Wu T."/>
            <person name="Yu G."/>
            <person name="Miranda M."/>
            <person name="Quach H.L."/>
            <person name="Tripp M."/>
            <person name="Chang C.H."/>
            <person name="Lee J.M."/>
            <person name="Toriumi M.J."/>
            <person name="Chan M.M."/>
            <person name="Tang C.C."/>
            <person name="Onodera C.S."/>
            <person name="Deng J.M."/>
            <person name="Akiyama K."/>
            <person name="Ansari Y."/>
            <person name="Arakawa T."/>
            <person name="Banh J."/>
            <person name="Banno F."/>
            <person name="Bowser L."/>
            <person name="Brooks S.Y."/>
            <person name="Carninci P."/>
            <person name="Chao Q."/>
            <person name="Choy N."/>
            <person name="Enju A."/>
            <person name="Goldsmith A.D."/>
            <person name="Gurjal M."/>
            <person name="Hansen N.F."/>
            <person name="Hayashizaki Y."/>
            <person name="Johnson-Hopson C."/>
            <person name="Hsuan V.W."/>
            <person name="Iida K."/>
            <person name="Karnes M."/>
            <person name="Khan S."/>
            <person name="Koesema E."/>
            <person name="Ishida J."/>
            <person name="Jiang P.X."/>
            <person name="Jones T."/>
            <person name="Kawai J."/>
            <person name="Kamiya A."/>
            <person name="Meyers C."/>
            <person name="Nakajima M."/>
            <person name="Narusaka M."/>
            <person name="Seki M."/>
            <person name="Sakurai T."/>
            <person name="Satou M."/>
            <person name="Tamse R."/>
            <person name="Vaysberg M."/>
            <person name="Wallender E.K."/>
            <person name="Wong C."/>
            <person name="Yamamura Y."/>
            <person name="Yuan S."/>
            <person name="Shinozaki K."/>
            <person name="Davis R.W."/>
            <person name="Theologis A."/>
            <person name="Ecker J.R."/>
        </authorList>
    </citation>
    <scope>NUCLEOTIDE SEQUENCE [LARGE SCALE MRNA] (ISOFORM 2)</scope>
    <source>
        <strain>cv. Columbia</strain>
    </source>
</reference>
<reference key="4">
    <citation type="submission" date="2002-03" db="EMBL/GenBank/DDBJ databases">
        <title>Full-length cDNA from Arabidopsis thaliana.</title>
        <authorList>
            <person name="Brover V.V."/>
            <person name="Troukhan M.E."/>
            <person name="Alexandrov N.A."/>
            <person name="Lu Y.-P."/>
            <person name="Flavell R.B."/>
            <person name="Feldmann K.A."/>
        </authorList>
    </citation>
    <scope>NUCLEOTIDE SEQUENCE [LARGE SCALE MRNA] (ISOFORM 2)</scope>
</reference>
<reference key="5">
    <citation type="submission" date="2004-09" db="EMBL/GenBank/DDBJ databases">
        <authorList>
            <person name="Wrobel R.L."/>
            <person name="Kimball T.L."/>
            <person name="Riters M.A."/>
            <person name="Steffen E."/>
            <person name="Thao S."/>
            <person name="Aceti D.J."/>
            <person name="Blommel P.G."/>
            <person name="Newman C.S."/>
            <person name="Zhao Q."/>
            <person name="Fox B.G."/>
            <person name="Phillips G.N."/>
            <person name="Markley J.L."/>
        </authorList>
    </citation>
    <scope>NUCLEOTIDE SEQUENCE [LARGE SCALE MRNA] OF 2-299 (ISOFORM 1)</scope>
</reference>
<reference key="6">
    <citation type="journal article" date="2011" name="Plant Cell">
        <title>Augmin plays a critical role in organizing the spindle and phragmoplast microtubule arrays in Arabidopsis.</title>
        <authorList>
            <person name="Ho C.M."/>
            <person name="Hotta T."/>
            <person name="Kong Z."/>
            <person name="Zeng C.J."/>
            <person name="Sun J."/>
            <person name="Lee Y.R."/>
            <person name="Liu B."/>
        </authorList>
    </citation>
    <scope>SUBCELLULAR LOCATION</scope>
    <scope>INTERACTION WITH AUG3</scope>
</reference>
<reference key="7">
    <citation type="journal article" date="2012" name="Mol. Cell. Proteomics">
        <title>Comparative large-scale characterisation of plant vs. mammal proteins reveals similar and idiosyncratic N-alpha acetylation features.</title>
        <authorList>
            <person name="Bienvenut W.V."/>
            <person name="Sumpton D."/>
            <person name="Martinez A."/>
            <person name="Lilla S."/>
            <person name="Espagne C."/>
            <person name="Meinnel T."/>
            <person name="Giglione C."/>
        </authorList>
    </citation>
    <scope>ACETYLATION [LARGE SCALE ANALYSIS] AT SER-2</scope>
    <scope>CLEAVAGE OF INITIATOR METHIONINE [LARGE SCALE ANALYSIS]</scope>
    <scope>IDENTIFICATION BY MASS SPECTROMETRY [LARGE SCALE ANALYSIS]</scope>
</reference>
<reference key="8">
    <citation type="journal article" date="2012" name="Plant Cell">
        <title>Characterization of the Arabidopsis augmin complex uncovers its critical function in the assembly of the acentrosomal spindle and phragmoplast microtubule arrays.</title>
        <authorList>
            <person name="Hotta T."/>
            <person name="Kong Z."/>
            <person name="Ho C.M."/>
            <person name="Zeng C.J."/>
            <person name="Horio T."/>
            <person name="Fong S."/>
            <person name="Vuong T."/>
            <person name="Lee Y.R."/>
            <person name="Liu B."/>
        </authorList>
    </citation>
    <scope>FUNCTION</scope>
    <scope>IDENTIFICATION IN THE AUGMIN COMPLEX BY MASS SPECTROMETRY</scope>
    <scope>DISRUPTION PHENOTYPE</scope>
</reference>
<comment type="function">
    <text evidence="3">Involved in microtubules reorganization during spindle and phragmoplast development.</text>
</comment>
<comment type="subunit">
    <text evidence="2 3">Part of the augmin complex composed of 8 subunits (PubMed:22505726). The complex acts on microtubules and interacts with gamma-tubulin in spindles and the phragmoplast (PubMed:22505726). Interacts with AUG3 (PubMed:21750235).</text>
</comment>
<comment type="subcellular location">
    <subcellularLocation>
        <location evidence="2">Cytoplasm</location>
        <location evidence="2">Cytoskeleton</location>
        <location evidence="2">Spindle</location>
    </subcellularLocation>
    <subcellularLocation>
        <location evidence="2">Cytoplasm</location>
        <location evidence="2">Cytoskeleton</location>
        <location evidence="2">Phragmoplast</location>
    </subcellularLocation>
    <text evidence="2">Preferentially localizes to microtubules minus ends.</text>
</comment>
<comment type="alternative products">
    <event type="alternative splicing"/>
    <isoform>
        <id>F4IK01-1</id>
        <name>1</name>
        <sequence type="displayed"/>
    </isoform>
    <isoform>
        <id>F4IK01-2</id>
        <name>2</name>
        <sequence type="described" ref="VSP_057898"/>
    </isoform>
</comment>
<comment type="disruption phenotype">
    <text evidence="3">Lethal when homozygous.</text>
</comment>
<comment type="similarity">
    <text evidence="5">Belongs to the HAUS1 family.</text>
</comment>
<gene>
    <name evidence="4" type="primary">AUG1</name>
    <name evidence="6" type="ordered locus">At2g41350</name>
    <name evidence="7" type="ORF">F13H10.10</name>
</gene>
<feature type="initiator methionine" description="Removed" evidence="9">
    <location>
        <position position="1"/>
    </location>
</feature>
<feature type="chain" id="PRO_0000434091" description="AUGMIN subunit 1">
    <location>
        <begin position="2"/>
        <end position="299"/>
    </location>
</feature>
<feature type="coiled-coil region" evidence="1">
    <location>
        <begin position="76"/>
        <end position="96"/>
    </location>
</feature>
<feature type="coiled-coil region" evidence="1">
    <location>
        <begin position="164"/>
        <end position="184"/>
    </location>
</feature>
<feature type="modified residue" description="N-acetylserine" evidence="9">
    <location>
        <position position="2"/>
    </location>
</feature>
<feature type="splice variant" id="VSP_057898" description="In isoform 2.">
    <location>
        <position position="217"/>
    </location>
</feature>
<dbReference type="EMBL" id="AC005662">
    <property type="protein sequence ID" value="AAC78538.2"/>
    <property type="molecule type" value="Genomic_DNA"/>
</dbReference>
<dbReference type="EMBL" id="CP002685">
    <property type="protein sequence ID" value="AEC09963.1"/>
    <property type="molecule type" value="Genomic_DNA"/>
</dbReference>
<dbReference type="EMBL" id="CP002685">
    <property type="protein sequence ID" value="AEC09964.1"/>
    <property type="molecule type" value="Genomic_DNA"/>
</dbReference>
<dbReference type="EMBL" id="AY075602">
    <property type="protein sequence ID" value="AAL91618.1"/>
    <property type="molecule type" value="mRNA"/>
</dbReference>
<dbReference type="EMBL" id="AY143923">
    <property type="protein sequence ID" value="AAN28862.1"/>
    <property type="molecule type" value="mRNA"/>
</dbReference>
<dbReference type="EMBL" id="AY084814">
    <property type="protein sequence ID" value="AAM61380.1"/>
    <property type="molecule type" value="mRNA"/>
</dbReference>
<dbReference type="EMBL" id="BT015461">
    <property type="status" value="NOT_ANNOTATED_CDS"/>
    <property type="molecule type" value="mRNA"/>
</dbReference>
<dbReference type="PIR" id="F84840">
    <property type="entry name" value="F84840"/>
</dbReference>
<dbReference type="RefSeq" id="NP_001031524.1">
    <molecule id="F4IK01-1"/>
    <property type="nucleotide sequence ID" value="NM_001036447.2"/>
</dbReference>
<dbReference type="RefSeq" id="NP_565949.1">
    <molecule id="F4IK01-2"/>
    <property type="nucleotide sequence ID" value="NM_129698.3"/>
</dbReference>
<dbReference type="SMR" id="F4IK01"/>
<dbReference type="FunCoup" id="F4IK01">
    <property type="interactions" value="2317"/>
</dbReference>
<dbReference type="IntAct" id="F4IK01">
    <property type="interactions" value="14"/>
</dbReference>
<dbReference type="STRING" id="3702.F4IK01"/>
<dbReference type="iPTMnet" id="F4IK01"/>
<dbReference type="PaxDb" id="3702-AT2G41350.2"/>
<dbReference type="ProteomicsDB" id="240926">
    <molecule id="F4IK01-1"/>
</dbReference>
<dbReference type="EnsemblPlants" id="AT2G41350.1">
    <molecule id="F4IK01-2"/>
    <property type="protein sequence ID" value="AT2G41350.1"/>
    <property type="gene ID" value="AT2G41350"/>
</dbReference>
<dbReference type="EnsemblPlants" id="AT2G41350.2">
    <molecule id="F4IK01-1"/>
    <property type="protein sequence ID" value="AT2G41350.2"/>
    <property type="gene ID" value="AT2G41350"/>
</dbReference>
<dbReference type="GeneID" id="818733"/>
<dbReference type="Gramene" id="AT2G41350.1">
    <molecule id="F4IK01-2"/>
    <property type="protein sequence ID" value="AT2G41350.1"/>
    <property type="gene ID" value="AT2G41350"/>
</dbReference>
<dbReference type="Gramene" id="AT2G41350.2">
    <molecule id="F4IK01-1"/>
    <property type="protein sequence ID" value="AT2G41350.2"/>
    <property type="gene ID" value="AT2G41350"/>
</dbReference>
<dbReference type="KEGG" id="ath:AT2G41350"/>
<dbReference type="Araport" id="AT2G41350"/>
<dbReference type="TAIR" id="AT2G41350">
    <property type="gene designation" value="AUG1"/>
</dbReference>
<dbReference type="eggNOG" id="ENOG502QSQA">
    <property type="taxonomic scope" value="Eukaryota"/>
</dbReference>
<dbReference type="HOGENOM" id="CLU_077821_0_0_1"/>
<dbReference type="InParanoid" id="F4IK01"/>
<dbReference type="OMA" id="CEAQMES"/>
<dbReference type="OrthoDB" id="5372507at2759"/>
<dbReference type="PhylomeDB" id="F4IK01"/>
<dbReference type="PRO" id="PR:F4IK01"/>
<dbReference type="Proteomes" id="UP000006548">
    <property type="component" value="Chromosome 2"/>
</dbReference>
<dbReference type="ExpressionAtlas" id="F4IK01">
    <property type="expression patterns" value="baseline and differential"/>
</dbReference>
<dbReference type="GO" id="GO:0070652">
    <property type="term" value="C:HAUS complex"/>
    <property type="evidence" value="ECO:0007669"/>
    <property type="project" value="InterPro"/>
</dbReference>
<dbReference type="GO" id="GO:0005874">
    <property type="term" value="C:microtubule"/>
    <property type="evidence" value="ECO:0007669"/>
    <property type="project" value="UniProtKB-KW"/>
</dbReference>
<dbReference type="GO" id="GO:0009524">
    <property type="term" value="C:phragmoplast"/>
    <property type="evidence" value="ECO:0007669"/>
    <property type="project" value="UniProtKB-SubCell"/>
</dbReference>
<dbReference type="GO" id="GO:0005819">
    <property type="term" value="C:spindle"/>
    <property type="evidence" value="ECO:0000314"/>
    <property type="project" value="TAIR"/>
</dbReference>
<dbReference type="GO" id="GO:0051301">
    <property type="term" value="P:cell division"/>
    <property type="evidence" value="ECO:0007669"/>
    <property type="project" value="UniProtKB-KW"/>
</dbReference>
<dbReference type="GO" id="GO:0051225">
    <property type="term" value="P:spindle assembly"/>
    <property type="evidence" value="ECO:0007669"/>
    <property type="project" value="InterPro"/>
</dbReference>
<dbReference type="InterPro" id="IPR026243">
    <property type="entry name" value="HAUS1"/>
</dbReference>
<dbReference type="PANTHER" id="PTHR31570">
    <property type="entry name" value="HAUS AUGMIN-LIKE COMPLEX SUBUNIT 1"/>
    <property type="match status" value="1"/>
</dbReference>
<dbReference type="PANTHER" id="PTHR31570:SF1">
    <property type="entry name" value="HAUS AUGMIN-LIKE COMPLEX SUBUNIT 1"/>
    <property type="match status" value="1"/>
</dbReference>
<dbReference type="PRINTS" id="PR02087">
    <property type="entry name" value="HAUSAUGMINL1"/>
</dbReference>
<sequence>MSDVTGDLAAVSEAKGGSDAARISEVKAWLTSQFEAVGKEVPNFEYTHRSITHLYNLATASQAKSQAATIVANDFRLKASEYRAQAARIREILESAGMSQESLPSNVVSSAQVLANVANLLNIRDTELSSFLVAMGDISLRKTGVEEKRAKAQKESNALLDYTRKAIQRLTYLKKILAQLEDDVVPCESQMENWKTNLEVMAVKEEQYIQQYKKYEQMLLNRVGYTPKISHRELVEMAEHRKELDKMTKPVLDTLRSYQDLPPDKALAALAIEDKKRQFTAAEKYLEEVLQSALETNDE</sequence>
<evidence type="ECO:0000255" key="1"/>
<evidence type="ECO:0000269" key="2">
    <source>
    </source>
</evidence>
<evidence type="ECO:0000269" key="3">
    <source>
    </source>
</evidence>
<evidence type="ECO:0000303" key="4">
    <source>
    </source>
</evidence>
<evidence type="ECO:0000305" key="5"/>
<evidence type="ECO:0000312" key="6">
    <source>
        <dbReference type="Araport" id="AT2G41350"/>
    </source>
</evidence>
<evidence type="ECO:0000312" key="7">
    <source>
        <dbReference type="EMBL" id="AAC78538.2"/>
    </source>
</evidence>
<evidence type="ECO:0000312" key="8">
    <source>
        <dbReference type="Proteomes" id="UP000006548"/>
    </source>
</evidence>
<evidence type="ECO:0007744" key="9">
    <source>
    </source>
</evidence>
<name>AUG1_ARATH</name>
<keyword id="KW-0007">Acetylation</keyword>
<keyword id="KW-0025">Alternative splicing</keyword>
<keyword id="KW-0131">Cell cycle</keyword>
<keyword id="KW-0132">Cell division</keyword>
<keyword id="KW-0175">Coiled coil</keyword>
<keyword id="KW-0963">Cytoplasm</keyword>
<keyword id="KW-0206">Cytoskeleton</keyword>
<keyword id="KW-0493">Microtubule</keyword>
<keyword id="KW-0498">Mitosis</keyword>
<keyword id="KW-1185">Reference proteome</keyword>
<protein>
    <recommendedName>
        <fullName evidence="4">AUGMIN subunit 1</fullName>
    </recommendedName>
</protein>
<proteinExistence type="evidence at protein level"/>
<accession>F4IK01</accession>
<accession>Q9ZVC0</accession>